<name>U512Q_DICDI</name>
<keyword id="KW-1185">Reference proteome</keyword>
<gene>
    <name type="ORF">DDB_G0279295</name>
</gene>
<reference key="1">
    <citation type="journal article" date="2005" name="Nature">
        <title>The genome of the social amoeba Dictyostelium discoideum.</title>
        <authorList>
            <person name="Eichinger L."/>
            <person name="Pachebat J.A."/>
            <person name="Gloeckner G."/>
            <person name="Rajandream M.A."/>
            <person name="Sucgang R."/>
            <person name="Berriman M."/>
            <person name="Song J."/>
            <person name="Olsen R."/>
            <person name="Szafranski K."/>
            <person name="Xu Q."/>
            <person name="Tunggal B."/>
            <person name="Kummerfeld S."/>
            <person name="Madera M."/>
            <person name="Konfortov B.A."/>
            <person name="Rivero F."/>
            <person name="Bankier A.T."/>
            <person name="Lehmann R."/>
            <person name="Hamlin N."/>
            <person name="Davies R."/>
            <person name="Gaudet P."/>
            <person name="Fey P."/>
            <person name="Pilcher K."/>
            <person name="Chen G."/>
            <person name="Saunders D."/>
            <person name="Sodergren E.J."/>
            <person name="Davis P."/>
            <person name="Kerhornou A."/>
            <person name="Nie X."/>
            <person name="Hall N."/>
            <person name="Anjard C."/>
            <person name="Hemphill L."/>
            <person name="Bason N."/>
            <person name="Farbrother P."/>
            <person name="Desany B."/>
            <person name="Just E."/>
            <person name="Morio T."/>
            <person name="Rost R."/>
            <person name="Churcher C.M."/>
            <person name="Cooper J."/>
            <person name="Haydock S."/>
            <person name="van Driessche N."/>
            <person name="Cronin A."/>
            <person name="Goodhead I."/>
            <person name="Muzny D.M."/>
            <person name="Mourier T."/>
            <person name="Pain A."/>
            <person name="Lu M."/>
            <person name="Harper D."/>
            <person name="Lindsay R."/>
            <person name="Hauser H."/>
            <person name="James K.D."/>
            <person name="Quiles M."/>
            <person name="Madan Babu M."/>
            <person name="Saito T."/>
            <person name="Buchrieser C."/>
            <person name="Wardroper A."/>
            <person name="Felder M."/>
            <person name="Thangavelu M."/>
            <person name="Johnson D."/>
            <person name="Knights A."/>
            <person name="Loulseged H."/>
            <person name="Mungall K.L."/>
            <person name="Oliver K."/>
            <person name="Price C."/>
            <person name="Quail M.A."/>
            <person name="Urushihara H."/>
            <person name="Hernandez J."/>
            <person name="Rabbinowitsch E."/>
            <person name="Steffen D."/>
            <person name="Sanders M."/>
            <person name="Ma J."/>
            <person name="Kohara Y."/>
            <person name="Sharp S."/>
            <person name="Simmonds M.N."/>
            <person name="Spiegler S."/>
            <person name="Tivey A."/>
            <person name="Sugano S."/>
            <person name="White B."/>
            <person name="Walker D."/>
            <person name="Woodward J.R."/>
            <person name="Winckler T."/>
            <person name="Tanaka Y."/>
            <person name="Shaulsky G."/>
            <person name="Schleicher M."/>
            <person name="Weinstock G.M."/>
            <person name="Rosenthal A."/>
            <person name="Cox E.C."/>
            <person name="Chisholm R.L."/>
            <person name="Gibbs R.A."/>
            <person name="Loomis W.F."/>
            <person name="Platzer M."/>
            <person name="Kay R.R."/>
            <person name="Williams J.G."/>
            <person name="Dear P.H."/>
            <person name="Noegel A.A."/>
            <person name="Barrell B.G."/>
            <person name="Kuspa A."/>
        </authorList>
    </citation>
    <scope>NUCLEOTIDE SEQUENCE [LARGE SCALE GENOMIC DNA]</scope>
    <source>
        <strain>AX4</strain>
    </source>
</reference>
<accession>Q54WZ9</accession>
<proteinExistence type="inferred from homology"/>
<feature type="chain" id="PRO_0000317355" description="UPF0512 protein Q">
    <location>
        <begin position="1"/>
        <end position="80"/>
    </location>
</feature>
<protein>
    <recommendedName>
        <fullName>UPF0512 protein Q</fullName>
    </recommendedName>
</protein>
<organism>
    <name type="scientific">Dictyostelium discoideum</name>
    <name type="common">Social amoeba</name>
    <dbReference type="NCBI Taxonomy" id="44689"/>
    <lineage>
        <taxon>Eukaryota</taxon>
        <taxon>Amoebozoa</taxon>
        <taxon>Evosea</taxon>
        <taxon>Eumycetozoa</taxon>
        <taxon>Dictyostelia</taxon>
        <taxon>Dictyosteliales</taxon>
        <taxon>Dictyosteliaceae</taxon>
        <taxon>Dictyostelium</taxon>
    </lineage>
</organism>
<evidence type="ECO:0000305" key="1"/>
<dbReference type="EMBL" id="AAFI02000030">
    <property type="protein sequence ID" value="EAL67796.1"/>
    <property type="molecule type" value="Genomic_DNA"/>
</dbReference>
<dbReference type="RefSeq" id="XP_641778.1">
    <property type="nucleotide sequence ID" value="XM_636686.1"/>
</dbReference>
<dbReference type="FunCoup" id="Q54WZ9">
    <property type="interactions" value="640"/>
</dbReference>
<dbReference type="PaxDb" id="44689-DDB0266577"/>
<dbReference type="EnsemblProtists" id="EAL67796">
    <property type="protein sequence ID" value="EAL67796"/>
    <property type="gene ID" value="DDB_G0279295"/>
</dbReference>
<dbReference type="GeneID" id="8621975"/>
<dbReference type="KEGG" id="ddi:DDB_G0279295"/>
<dbReference type="dictyBase" id="DDB_G0279295"/>
<dbReference type="HOGENOM" id="CLU_194865_0_0_1"/>
<dbReference type="InParanoid" id="Q54WZ9"/>
<dbReference type="PhylomeDB" id="Q54WZ9"/>
<dbReference type="PRO" id="PR:Q54WZ9"/>
<dbReference type="Proteomes" id="UP000002195">
    <property type="component" value="Chromosome 3"/>
</dbReference>
<sequence length="80" mass="8483">MTIFNTISSISNSTRTTSSSIATCNYNGSMANVNSTACFDNDFGEWGGLGGFNNGCGGGSNVNVINLDIDIGRRHHRRCC</sequence>
<comment type="similarity">
    <text evidence="1">Belongs to the UPF0512 family.</text>
</comment>